<keyword id="KW-1185">Reference proteome</keyword>
<keyword id="KW-0687">Ribonucleoprotein</keyword>
<keyword id="KW-0689">Ribosomal protein</keyword>
<sequence length="68" mass="7987">MKLNEVKEFVKELRGLSQEELAKRENELKKELFELRFQAATGQLEQTARLKEVKKQIARIKTVQSEAK</sequence>
<evidence type="ECO:0000305" key="1"/>
<feature type="chain" id="PRO_0000130468" description="Large ribosomal subunit protein uL29">
    <location>
        <begin position="1"/>
        <end position="68"/>
    </location>
</feature>
<comment type="similarity">
    <text evidence="1">Belongs to the universal ribosomal protein uL29 family.</text>
</comment>
<protein>
    <recommendedName>
        <fullName evidence="1">Large ribosomal subunit protein uL29</fullName>
    </recommendedName>
    <alternativeName>
        <fullName>50S ribosomal protein L29</fullName>
    </alternativeName>
</protein>
<organism>
    <name type="scientific">Streptococcus pneumoniae serotype 4 (strain ATCC BAA-334 / TIGR4)</name>
    <dbReference type="NCBI Taxonomy" id="170187"/>
    <lineage>
        <taxon>Bacteria</taxon>
        <taxon>Bacillati</taxon>
        <taxon>Bacillota</taxon>
        <taxon>Bacilli</taxon>
        <taxon>Lactobacillales</taxon>
        <taxon>Streptococcaceae</taxon>
        <taxon>Streptococcus</taxon>
    </lineage>
</organism>
<proteinExistence type="inferred from homology"/>
<reference key="1">
    <citation type="journal article" date="2000" name="Antimicrob. Agents Chemother.">
        <title>Mutations in ribosomal protein L16 conferring reduced susceptibility to evernimicin (SCH27899): implications for mechanism of action.</title>
        <authorList>
            <person name="Adrian P.V."/>
            <person name="Zhao W."/>
            <person name="Black T.A."/>
            <person name="Shaw K.J."/>
            <person name="Hare R.S."/>
            <person name="Klugman K.P."/>
        </authorList>
    </citation>
    <scope>NUCLEOTIDE SEQUENCE [GENOMIC DNA]</scope>
    <source>
        <strain>SP#5</strain>
        <strain>ZR1</strain>
    </source>
</reference>
<reference key="2">
    <citation type="journal article" date="2001" name="Science">
        <title>Complete genome sequence of a virulent isolate of Streptococcus pneumoniae.</title>
        <authorList>
            <person name="Tettelin H."/>
            <person name="Nelson K.E."/>
            <person name="Paulsen I.T."/>
            <person name="Eisen J.A."/>
            <person name="Read T.D."/>
            <person name="Peterson S.N."/>
            <person name="Heidelberg J.F."/>
            <person name="DeBoy R.T."/>
            <person name="Haft D.H."/>
            <person name="Dodson R.J."/>
            <person name="Durkin A.S."/>
            <person name="Gwinn M.L."/>
            <person name="Kolonay J.F."/>
            <person name="Nelson W.C."/>
            <person name="Peterson J.D."/>
            <person name="Umayam L.A."/>
            <person name="White O."/>
            <person name="Salzberg S.L."/>
            <person name="Lewis M.R."/>
            <person name="Radune D."/>
            <person name="Holtzapple E.K."/>
            <person name="Khouri H.M."/>
            <person name="Wolf A.M."/>
            <person name="Utterback T.R."/>
            <person name="Hansen C.L."/>
            <person name="McDonald L.A."/>
            <person name="Feldblyum T.V."/>
            <person name="Angiuoli S.V."/>
            <person name="Dickinson T."/>
            <person name="Hickey E.K."/>
            <person name="Holt I.E."/>
            <person name="Loftus B.J."/>
            <person name="Yang F."/>
            <person name="Smith H.O."/>
            <person name="Venter J.C."/>
            <person name="Dougherty B.A."/>
            <person name="Morrison D.A."/>
            <person name="Hollingshead S.K."/>
            <person name="Fraser C.M."/>
        </authorList>
    </citation>
    <scope>NUCLEOTIDE SEQUENCE [LARGE SCALE GENOMIC DNA]</scope>
    <source>
        <strain>ATCC BAA-334 / TIGR4</strain>
    </source>
</reference>
<accession>P0A483</accession>
<accession>Q9WVW8</accession>
<dbReference type="EMBL" id="AF126060">
    <property type="protein sequence ID" value="AAD33273.1"/>
    <property type="molecule type" value="Genomic_DNA"/>
</dbReference>
<dbReference type="EMBL" id="AF126061">
    <property type="protein sequence ID" value="AAD33282.1"/>
    <property type="molecule type" value="Genomic_DNA"/>
</dbReference>
<dbReference type="EMBL" id="AE005672">
    <property type="protein sequence ID" value="AAK74397.1"/>
    <property type="molecule type" value="Genomic_DNA"/>
</dbReference>
<dbReference type="PIR" id="D95025">
    <property type="entry name" value="D95025"/>
</dbReference>
<dbReference type="RefSeq" id="WP_000772918.1">
    <property type="nucleotide sequence ID" value="NZ_CP155539.1"/>
</dbReference>
<dbReference type="SMR" id="P0A483"/>
<dbReference type="PaxDb" id="170187-SP_0217"/>
<dbReference type="EnsemblBacteria" id="AAK74397">
    <property type="protein sequence ID" value="AAK74397"/>
    <property type="gene ID" value="SP_0217"/>
</dbReference>
<dbReference type="GeneID" id="93738965"/>
<dbReference type="KEGG" id="spn:SP_0217"/>
<dbReference type="eggNOG" id="COG0255">
    <property type="taxonomic scope" value="Bacteria"/>
</dbReference>
<dbReference type="PhylomeDB" id="P0A483"/>
<dbReference type="BioCyc" id="SPNE170187:G1FZB-222-MONOMER"/>
<dbReference type="Proteomes" id="UP000000585">
    <property type="component" value="Chromosome"/>
</dbReference>
<dbReference type="GO" id="GO:0022625">
    <property type="term" value="C:cytosolic large ribosomal subunit"/>
    <property type="evidence" value="ECO:0007669"/>
    <property type="project" value="TreeGrafter"/>
</dbReference>
<dbReference type="GO" id="GO:0003735">
    <property type="term" value="F:structural constituent of ribosome"/>
    <property type="evidence" value="ECO:0007669"/>
    <property type="project" value="InterPro"/>
</dbReference>
<dbReference type="GO" id="GO:0006412">
    <property type="term" value="P:translation"/>
    <property type="evidence" value="ECO:0007669"/>
    <property type="project" value="UniProtKB-UniRule"/>
</dbReference>
<dbReference type="CDD" id="cd00427">
    <property type="entry name" value="Ribosomal_L29_HIP"/>
    <property type="match status" value="1"/>
</dbReference>
<dbReference type="FunFam" id="1.10.287.310:FF:000001">
    <property type="entry name" value="50S ribosomal protein L29"/>
    <property type="match status" value="1"/>
</dbReference>
<dbReference type="Gene3D" id="1.10.287.310">
    <property type="match status" value="1"/>
</dbReference>
<dbReference type="HAMAP" id="MF_00374">
    <property type="entry name" value="Ribosomal_uL29"/>
    <property type="match status" value="1"/>
</dbReference>
<dbReference type="InterPro" id="IPR050063">
    <property type="entry name" value="Ribosomal_protein_uL29"/>
</dbReference>
<dbReference type="InterPro" id="IPR001854">
    <property type="entry name" value="Ribosomal_uL29"/>
</dbReference>
<dbReference type="InterPro" id="IPR018254">
    <property type="entry name" value="Ribosomal_uL29_CS"/>
</dbReference>
<dbReference type="InterPro" id="IPR036049">
    <property type="entry name" value="Ribosomal_uL29_sf"/>
</dbReference>
<dbReference type="NCBIfam" id="TIGR00012">
    <property type="entry name" value="L29"/>
    <property type="match status" value="1"/>
</dbReference>
<dbReference type="PANTHER" id="PTHR10916">
    <property type="entry name" value="60S RIBOSOMAL PROTEIN L35/50S RIBOSOMAL PROTEIN L29"/>
    <property type="match status" value="1"/>
</dbReference>
<dbReference type="PANTHER" id="PTHR10916:SF0">
    <property type="entry name" value="LARGE RIBOSOMAL SUBUNIT PROTEIN UL29C"/>
    <property type="match status" value="1"/>
</dbReference>
<dbReference type="Pfam" id="PF00831">
    <property type="entry name" value="Ribosomal_L29"/>
    <property type="match status" value="1"/>
</dbReference>
<dbReference type="SUPFAM" id="SSF46561">
    <property type="entry name" value="Ribosomal protein L29 (L29p)"/>
    <property type="match status" value="1"/>
</dbReference>
<dbReference type="PROSITE" id="PS00579">
    <property type="entry name" value="RIBOSOMAL_L29"/>
    <property type="match status" value="1"/>
</dbReference>
<name>RL29_STRPN</name>
<gene>
    <name type="primary">rpmC</name>
    <name type="ordered locus">SP_0217</name>
</gene>